<keyword id="KW-0150">Chloroplast</keyword>
<keyword id="KW-0472">Membrane</keyword>
<keyword id="KW-0602">Photosynthesis</keyword>
<keyword id="KW-0604">Photosystem II</keyword>
<keyword id="KW-0934">Plastid</keyword>
<keyword id="KW-0793">Thylakoid</keyword>
<keyword id="KW-0812">Transmembrane</keyword>
<keyword id="KW-1133">Transmembrane helix</keyword>
<gene>
    <name evidence="1" type="primary">psbT</name>
</gene>
<protein>
    <recommendedName>
        <fullName evidence="1">Photosystem II reaction center protein T</fullName>
        <shortName evidence="1">PSII-T</shortName>
    </recommendedName>
</protein>
<evidence type="ECO:0000255" key="1">
    <source>
        <dbReference type="HAMAP-Rule" id="MF_00808"/>
    </source>
</evidence>
<organism>
    <name type="scientific">Nymphaea alba</name>
    <name type="common">White water-lily</name>
    <name type="synonym">Castalia alba</name>
    <dbReference type="NCBI Taxonomy" id="34301"/>
    <lineage>
        <taxon>Eukaryota</taxon>
        <taxon>Viridiplantae</taxon>
        <taxon>Streptophyta</taxon>
        <taxon>Embryophyta</taxon>
        <taxon>Tracheophyta</taxon>
        <taxon>Spermatophyta</taxon>
        <taxon>Magnoliopsida</taxon>
        <taxon>Nymphaeales</taxon>
        <taxon>Nymphaeaceae</taxon>
        <taxon>Nymphaea</taxon>
    </lineage>
</organism>
<geneLocation type="chloroplast"/>
<reference key="1">
    <citation type="journal article" date="2004" name="Mol. Biol. Evol.">
        <title>The chloroplast genome of Nymphaea alba: whole-genome analyses and the problem of identifying the most basal angiosperm.</title>
        <authorList>
            <person name="Goremykin V.V."/>
            <person name="Hirsch-Ernst K.I."/>
            <person name="Woelfl S."/>
            <person name="Hellwig F.H."/>
        </authorList>
    </citation>
    <scope>NUCLEOTIDE SEQUENCE [LARGE SCALE GENOMIC DNA]</scope>
</reference>
<comment type="function">
    <text evidence="1">Found at the monomer-monomer interface of the photosystem II (PS II) dimer, plays a role in assembly and dimerization of PSII. PSII is a light-driven water plastoquinone oxidoreductase, using light energy to abstract electrons from H(2)O, generating a proton gradient subsequently used for ATP formation.</text>
</comment>
<comment type="subunit">
    <text evidence="1">PSII is composed of 1 copy each of membrane proteins PsbA, PsbB, PsbC, PsbD, PsbE, PsbF, PsbH, PsbI, PsbJ, PsbK, PsbL, PsbM, PsbT, PsbY, PsbZ, Psb30/Ycf12, at least 3 peripheral proteins of the oxygen-evolving complex and a large number of cofactors. It forms dimeric complexes.</text>
</comment>
<comment type="subcellular location">
    <subcellularLocation>
        <location evidence="1">Plastid</location>
        <location evidence="1">Chloroplast thylakoid membrane</location>
        <topology evidence="1">Single-pass membrane protein</topology>
    </subcellularLocation>
</comment>
<comment type="similarity">
    <text evidence="1">Belongs to the PsbT family.</text>
</comment>
<feature type="chain" id="PRO_0000217957" description="Photosystem II reaction center protein T">
    <location>
        <begin position="1"/>
        <end position="35"/>
    </location>
</feature>
<feature type="transmembrane region" description="Helical" evidence="1">
    <location>
        <begin position="3"/>
        <end position="23"/>
    </location>
</feature>
<accession>Q6EW25</accession>
<name>PSBT_NYMAL</name>
<dbReference type="EMBL" id="AJ627251">
    <property type="protein sequence ID" value="CAF28621.1"/>
    <property type="molecule type" value="Genomic_DNA"/>
</dbReference>
<dbReference type="RefSeq" id="YP_053181.1">
    <property type="nucleotide sequence ID" value="NC_006050.1"/>
</dbReference>
<dbReference type="SMR" id="Q6EW25"/>
<dbReference type="GeneID" id="2896133"/>
<dbReference type="GO" id="GO:0009535">
    <property type="term" value="C:chloroplast thylakoid membrane"/>
    <property type="evidence" value="ECO:0007669"/>
    <property type="project" value="UniProtKB-SubCell"/>
</dbReference>
<dbReference type="GO" id="GO:0009539">
    <property type="term" value="C:photosystem II reaction center"/>
    <property type="evidence" value="ECO:0007669"/>
    <property type="project" value="InterPro"/>
</dbReference>
<dbReference type="GO" id="GO:0015979">
    <property type="term" value="P:photosynthesis"/>
    <property type="evidence" value="ECO:0007669"/>
    <property type="project" value="UniProtKB-UniRule"/>
</dbReference>
<dbReference type="HAMAP" id="MF_00808">
    <property type="entry name" value="PSII_PsbT"/>
    <property type="match status" value="1"/>
</dbReference>
<dbReference type="InterPro" id="IPR001743">
    <property type="entry name" value="PSII_PsbT"/>
</dbReference>
<dbReference type="InterPro" id="IPR037268">
    <property type="entry name" value="PSII_PsbT_sf"/>
</dbReference>
<dbReference type="PANTHER" id="PTHR36411">
    <property type="match status" value="1"/>
</dbReference>
<dbReference type="PANTHER" id="PTHR36411:SF2">
    <property type="entry name" value="PHOTOSYSTEM II REACTION CENTER PROTEIN T"/>
    <property type="match status" value="1"/>
</dbReference>
<dbReference type="Pfam" id="PF01405">
    <property type="entry name" value="PsbT"/>
    <property type="match status" value="1"/>
</dbReference>
<dbReference type="SUPFAM" id="SSF161029">
    <property type="entry name" value="Photosystem II reaction center protein T, PsbT"/>
    <property type="match status" value="1"/>
</dbReference>
<proteinExistence type="inferred from homology"/>
<sequence>MEALVYTFLLVSTLGIIFFAIFFREPPKVPNKKMK</sequence>